<comment type="function">
    <text evidence="1">May be involved in plant defense.</text>
</comment>
<comment type="subcellular location">
    <subcellularLocation>
        <location evidence="3">Secreted</location>
    </subcellularLocation>
</comment>
<comment type="PTM">
    <text evidence="3">Is disulfide-linked.</text>
</comment>
<comment type="similarity">
    <text evidence="3">Belongs to the plant thionin (TC 1.C.44) family.</text>
</comment>
<comment type="sequence caution" evidence="3">
    <conflict type="erroneous gene model prediction">
        <sequence resource="EMBL-CDS" id="AAF88082"/>
    </conflict>
    <text>The predicted gene At1g12660 has been split into 2 genes: At1g12660 and At1g12663.</text>
</comment>
<dbReference type="EMBL" id="AC025417">
    <property type="protein sequence ID" value="AAF88082.1"/>
    <property type="status" value="ALT_SEQ"/>
    <property type="molecule type" value="Genomic_DNA"/>
</dbReference>
<dbReference type="EMBL" id="CP002684">
    <property type="protein sequence ID" value="AEE28910.1"/>
    <property type="molecule type" value="Genomic_DNA"/>
</dbReference>
<dbReference type="RefSeq" id="NP_001077526.1">
    <property type="nucleotide sequence ID" value="NM_001084057.2"/>
</dbReference>
<dbReference type="STRING" id="3702.A8MRP4"/>
<dbReference type="PaxDb" id="3702-AT1G12663.1"/>
<dbReference type="EnsemblPlants" id="AT1G12663.1">
    <property type="protein sequence ID" value="AT1G12663.1"/>
    <property type="gene ID" value="AT1G12663"/>
</dbReference>
<dbReference type="GeneID" id="5007688"/>
<dbReference type="Gramene" id="AT1G12663.1">
    <property type="protein sequence ID" value="AT1G12663.1"/>
    <property type="gene ID" value="AT1G12663"/>
</dbReference>
<dbReference type="KEGG" id="ath:AT1G12663"/>
<dbReference type="Araport" id="AT1G12663"/>
<dbReference type="TAIR" id="AT1G12663"/>
<dbReference type="eggNOG" id="ENOG502S8HN">
    <property type="taxonomic scope" value="Eukaryota"/>
</dbReference>
<dbReference type="HOGENOM" id="CLU_143102_1_0_1"/>
<dbReference type="InParanoid" id="A8MRP4"/>
<dbReference type="OMA" id="TDCYTRC"/>
<dbReference type="PhylomeDB" id="A8MRP4"/>
<dbReference type="PRO" id="PR:A8MRP4"/>
<dbReference type="Proteomes" id="UP000006548">
    <property type="component" value="Chromosome 1"/>
</dbReference>
<dbReference type="ExpressionAtlas" id="A8MRP4">
    <property type="expression patterns" value="baseline"/>
</dbReference>
<dbReference type="GO" id="GO:0005576">
    <property type="term" value="C:extracellular region"/>
    <property type="evidence" value="ECO:0007669"/>
    <property type="project" value="UniProtKB-SubCell"/>
</dbReference>
<dbReference type="GO" id="GO:0006952">
    <property type="term" value="P:defense response"/>
    <property type="evidence" value="ECO:0000250"/>
    <property type="project" value="TAIR"/>
</dbReference>
<dbReference type="InterPro" id="IPR038975">
    <property type="entry name" value="THNL"/>
</dbReference>
<dbReference type="PANTHER" id="PTHR36312">
    <property type="entry name" value="THIONIN-LIKE PROTEIN 1"/>
    <property type="match status" value="1"/>
</dbReference>
<dbReference type="PANTHER" id="PTHR36312:SF16">
    <property type="entry name" value="THIONIN-LIKE PROTEIN 2"/>
    <property type="match status" value="1"/>
</dbReference>
<gene>
    <name type="ordered locus">At1g12663</name>
    <name type="ORF">T12C24.19</name>
</gene>
<sequence length="115" mass="12554">MLVAVMIVMVIGNLLAQTAAQKIPFKECYPACLVECKAGSKFPKYLKCPFTCTKECLQQPSPPSVSSNNIDESDYFCKLGCATYHCVSLSSIQNPNVERVSACVDSCSNKCTKKN</sequence>
<keyword id="KW-1015">Disulfide bond</keyword>
<keyword id="KW-0611">Plant defense</keyword>
<keyword id="KW-1185">Reference proteome</keyword>
<keyword id="KW-0964">Secreted</keyword>
<keyword id="KW-0732">Signal</keyword>
<feature type="signal peptide" evidence="2">
    <location>
        <begin position="1"/>
        <end position="20"/>
    </location>
</feature>
<feature type="chain" id="PRO_0000415905" description="Thionin-like protein 2">
    <location>
        <begin position="21"/>
        <end position="115"/>
    </location>
</feature>
<proteinExistence type="inferred from homology"/>
<name>THNL2_ARATH</name>
<protein>
    <recommendedName>
        <fullName>Thionin-like protein 2</fullName>
    </recommendedName>
</protein>
<reference key="1">
    <citation type="journal article" date="2000" name="Nature">
        <title>Sequence and analysis of chromosome 1 of the plant Arabidopsis thaliana.</title>
        <authorList>
            <person name="Theologis A."/>
            <person name="Ecker J.R."/>
            <person name="Palm C.J."/>
            <person name="Federspiel N.A."/>
            <person name="Kaul S."/>
            <person name="White O."/>
            <person name="Alonso J."/>
            <person name="Altafi H."/>
            <person name="Araujo R."/>
            <person name="Bowman C.L."/>
            <person name="Brooks S.Y."/>
            <person name="Buehler E."/>
            <person name="Chan A."/>
            <person name="Chao Q."/>
            <person name="Chen H."/>
            <person name="Cheuk R.F."/>
            <person name="Chin C.W."/>
            <person name="Chung M.K."/>
            <person name="Conn L."/>
            <person name="Conway A.B."/>
            <person name="Conway A.R."/>
            <person name="Creasy T.H."/>
            <person name="Dewar K."/>
            <person name="Dunn P."/>
            <person name="Etgu P."/>
            <person name="Feldblyum T.V."/>
            <person name="Feng J.-D."/>
            <person name="Fong B."/>
            <person name="Fujii C.Y."/>
            <person name="Gill J.E."/>
            <person name="Goldsmith A.D."/>
            <person name="Haas B."/>
            <person name="Hansen N.F."/>
            <person name="Hughes B."/>
            <person name="Huizar L."/>
            <person name="Hunter J.L."/>
            <person name="Jenkins J."/>
            <person name="Johnson-Hopson C."/>
            <person name="Khan S."/>
            <person name="Khaykin E."/>
            <person name="Kim C.J."/>
            <person name="Koo H.L."/>
            <person name="Kremenetskaia I."/>
            <person name="Kurtz D.B."/>
            <person name="Kwan A."/>
            <person name="Lam B."/>
            <person name="Langin-Hooper S."/>
            <person name="Lee A."/>
            <person name="Lee J.M."/>
            <person name="Lenz C.A."/>
            <person name="Li J.H."/>
            <person name="Li Y.-P."/>
            <person name="Lin X."/>
            <person name="Liu S.X."/>
            <person name="Liu Z.A."/>
            <person name="Luros J.S."/>
            <person name="Maiti R."/>
            <person name="Marziali A."/>
            <person name="Militscher J."/>
            <person name="Miranda M."/>
            <person name="Nguyen M."/>
            <person name="Nierman W.C."/>
            <person name="Osborne B.I."/>
            <person name="Pai G."/>
            <person name="Peterson J."/>
            <person name="Pham P.K."/>
            <person name="Rizzo M."/>
            <person name="Rooney T."/>
            <person name="Rowley D."/>
            <person name="Sakano H."/>
            <person name="Salzberg S.L."/>
            <person name="Schwartz J.R."/>
            <person name="Shinn P."/>
            <person name="Southwick A.M."/>
            <person name="Sun H."/>
            <person name="Tallon L.J."/>
            <person name="Tambunga G."/>
            <person name="Toriumi M.J."/>
            <person name="Town C.D."/>
            <person name="Utterback T."/>
            <person name="Van Aken S."/>
            <person name="Vaysberg M."/>
            <person name="Vysotskaia V.S."/>
            <person name="Walker M."/>
            <person name="Wu D."/>
            <person name="Yu G."/>
            <person name="Fraser C.M."/>
            <person name="Venter J.C."/>
            <person name="Davis R.W."/>
        </authorList>
    </citation>
    <scope>NUCLEOTIDE SEQUENCE [LARGE SCALE GENOMIC DNA]</scope>
    <source>
        <strain>cv. Columbia</strain>
    </source>
</reference>
<reference key="2">
    <citation type="journal article" date="2017" name="Plant J.">
        <title>Araport11: a complete reannotation of the Arabidopsis thaliana reference genome.</title>
        <authorList>
            <person name="Cheng C.Y."/>
            <person name="Krishnakumar V."/>
            <person name="Chan A.P."/>
            <person name="Thibaud-Nissen F."/>
            <person name="Schobel S."/>
            <person name="Town C.D."/>
        </authorList>
    </citation>
    <scope>GENOME REANNOTATION</scope>
    <source>
        <strain>cv. Columbia</strain>
    </source>
</reference>
<organism>
    <name type="scientific">Arabidopsis thaliana</name>
    <name type="common">Mouse-ear cress</name>
    <dbReference type="NCBI Taxonomy" id="3702"/>
    <lineage>
        <taxon>Eukaryota</taxon>
        <taxon>Viridiplantae</taxon>
        <taxon>Streptophyta</taxon>
        <taxon>Embryophyta</taxon>
        <taxon>Tracheophyta</taxon>
        <taxon>Spermatophyta</taxon>
        <taxon>Magnoliopsida</taxon>
        <taxon>eudicotyledons</taxon>
        <taxon>Gunneridae</taxon>
        <taxon>Pentapetalae</taxon>
        <taxon>rosids</taxon>
        <taxon>malvids</taxon>
        <taxon>Brassicales</taxon>
        <taxon>Brassicaceae</taxon>
        <taxon>Camelineae</taxon>
        <taxon>Arabidopsis</taxon>
    </lineage>
</organism>
<accession>A8MRP4</accession>
<accession>Q9LN81</accession>
<evidence type="ECO:0000250" key="1"/>
<evidence type="ECO:0000255" key="2"/>
<evidence type="ECO:0000305" key="3"/>